<proteinExistence type="inferred from homology"/>
<name>END8_SALA4</name>
<evidence type="ECO:0000255" key="1">
    <source>
        <dbReference type="HAMAP-Rule" id="MF_01253"/>
    </source>
</evidence>
<feature type="initiator methionine" description="Removed" evidence="1">
    <location>
        <position position="1"/>
    </location>
</feature>
<feature type="chain" id="PRO_1000139939" description="Endonuclease 8">
    <location>
        <begin position="2"/>
        <end position="263"/>
    </location>
</feature>
<feature type="zinc finger region" description="FPG-type" evidence="1">
    <location>
        <begin position="229"/>
        <end position="263"/>
    </location>
</feature>
<feature type="active site" description="Schiff-base intermediate with DNA" evidence="1">
    <location>
        <position position="2"/>
    </location>
</feature>
<feature type="active site" description="Proton donor" evidence="1">
    <location>
        <position position="3"/>
    </location>
</feature>
<feature type="active site" description="Proton donor; for beta-elimination activity" evidence="1">
    <location>
        <position position="53"/>
    </location>
</feature>
<feature type="active site" description="Proton donor; for delta-elimination activity" evidence="1">
    <location>
        <position position="253"/>
    </location>
</feature>
<feature type="binding site" evidence="1">
    <location>
        <position position="70"/>
    </location>
    <ligand>
        <name>DNA</name>
        <dbReference type="ChEBI" id="CHEBI:16991"/>
    </ligand>
</feature>
<feature type="binding site" evidence="1">
    <location>
        <position position="125"/>
    </location>
    <ligand>
        <name>DNA</name>
        <dbReference type="ChEBI" id="CHEBI:16991"/>
    </ligand>
</feature>
<feature type="binding site" evidence="1">
    <location>
        <position position="169"/>
    </location>
    <ligand>
        <name>DNA</name>
        <dbReference type="ChEBI" id="CHEBI:16991"/>
    </ligand>
</feature>
<accession>B5EZF2</accession>
<sequence>MPEGPEIRRAADNLEAAIKGKPLTDVWFAFAQLKPYESQLTGQIVTRIETRGKALLTHFSNGLTLYSHNQLYGVWRVIDTGEIPKTTRILRVRLQTADKTILLYSASDIEMLTAEQLTTHPFLQRVGPDVLDARLTPEEVKARLLSPRFRNRQFSGLLLDQAFLAGLGNYLRVEILWQVGLTGQHKAKDLNEAQLNALSHALLDIPRLSYTTRGQADENKHHGALFRFKVFHRDGEACERCGGIIEKTTLSSRPFYWCPHCQK</sequence>
<gene>
    <name evidence="1" type="primary">nei</name>
    <name type="ordered locus">SeAg_B0762</name>
</gene>
<comment type="function">
    <text evidence="1">Involved in base excision repair of DNA damaged by oxidation or by mutagenic agents. Acts as a DNA glycosylase that recognizes and removes damaged bases. Has a preference for oxidized pyrimidines, such as thymine glycol, 5,6-dihydrouracil and 5,6-dihydrothymine. Has AP (apurinic/apyrimidinic) lyase activity and introduces nicks in the DNA strand. Cleaves the DNA backbone by beta-delta elimination to generate a single-strand break at the site of the removed base with both 3'- and 5'-phosphates.</text>
</comment>
<comment type="catalytic activity">
    <reaction evidence="1">
        <text>2'-deoxyribonucleotide-(2'-deoxyribose 5'-phosphate)-2'-deoxyribonucleotide-DNA = a 3'-end 2'-deoxyribonucleotide-(2,3-dehydro-2,3-deoxyribose 5'-phosphate)-DNA + a 5'-end 5'-phospho-2'-deoxyribonucleoside-DNA + H(+)</text>
        <dbReference type="Rhea" id="RHEA:66592"/>
        <dbReference type="Rhea" id="RHEA-COMP:13180"/>
        <dbReference type="Rhea" id="RHEA-COMP:16897"/>
        <dbReference type="Rhea" id="RHEA-COMP:17067"/>
        <dbReference type="ChEBI" id="CHEBI:15378"/>
        <dbReference type="ChEBI" id="CHEBI:136412"/>
        <dbReference type="ChEBI" id="CHEBI:157695"/>
        <dbReference type="ChEBI" id="CHEBI:167181"/>
        <dbReference type="EC" id="4.2.99.18"/>
    </reaction>
</comment>
<comment type="cofactor">
    <cofactor evidence="1">
        <name>Zn(2+)</name>
        <dbReference type="ChEBI" id="CHEBI:29105"/>
    </cofactor>
    <text evidence="1">Binds 1 zinc ion per subunit.</text>
</comment>
<comment type="similarity">
    <text evidence="1">Belongs to the FPG family.</text>
</comment>
<organism>
    <name type="scientific">Salmonella agona (strain SL483)</name>
    <dbReference type="NCBI Taxonomy" id="454166"/>
    <lineage>
        <taxon>Bacteria</taxon>
        <taxon>Pseudomonadati</taxon>
        <taxon>Pseudomonadota</taxon>
        <taxon>Gammaproteobacteria</taxon>
        <taxon>Enterobacterales</taxon>
        <taxon>Enterobacteriaceae</taxon>
        <taxon>Salmonella</taxon>
    </lineage>
</organism>
<protein>
    <recommendedName>
        <fullName evidence="1">Endonuclease 8</fullName>
    </recommendedName>
    <alternativeName>
        <fullName evidence="1">DNA glycosylase/AP lyase Nei</fullName>
        <ecNumber evidence="1">3.2.2.-</ecNumber>
        <ecNumber evidence="1">4.2.99.18</ecNumber>
    </alternativeName>
    <alternativeName>
        <fullName evidence="1">DNA-(apurinic or apyrimidinic site) lyase Nei</fullName>
    </alternativeName>
    <alternativeName>
        <fullName evidence="1">Endonuclease VIII</fullName>
    </alternativeName>
</protein>
<dbReference type="EC" id="3.2.2.-" evidence="1"/>
<dbReference type="EC" id="4.2.99.18" evidence="1"/>
<dbReference type="EMBL" id="CP001138">
    <property type="protein sequence ID" value="ACH52592.1"/>
    <property type="molecule type" value="Genomic_DNA"/>
</dbReference>
<dbReference type="RefSeq" id="WP_001113960.1">
    <property type="nucleotide sequence ID" value="NC_011149.1"/>
</dbReference>
<dbReference type="SMR" id="B5EZF2"/>
<dbReference type="KEGG" id="sea:SeAg_B0762"/>
<dbReference type="HOGENOM" id="CLU_038423_2_2_6"/>
<dbReference type="Proteomes" id="UP000008819">
    <property type="component" value="Chromosome"/>
</dbReference>
<dbReference type="GO" id="GO:0140078">
    <property type="term" value="F:class I DNA-(apurinic or apyrimidinic site) endonuclease activity"/>
    <property type="evidence" value="ECO:0007669"/>
    <property type="project" value="UniProtKB-EC"/>
</dbReference>
<dbReference type="GO" id="GO:0003684">
    <property type="term" value="F:damaged DNA binding"/>
    <property type="evidence" value="ECO:0007669"/>
    <property type="project" value="InterPro"/>
</dbReference>
<dbReference type="GO" id="GO:0000703">
    <property type="term" value="F:oxidized pyrimidine nucleobase lesion DNA N-glycosylase activity"/>
    <property type="evidence" value="ECO:0007669"/>
    <property type="project" value="UniProtKB-UniRule"/>
</dbReference>
<dbReference type="GO" id="GO:0008270">
    <property type="term" value="F:zinc ion binding"/>
    <property type="evidence" value="ECO:0007669"/>
    <property type="project" value="UniProtKB-UniRule"/>
</dbReference>
<dbReference type="GO" id="GO:0006284">
    <property type="term" value="P:base-excision repair"/>
    <property type="evidence" value="ECO:0007669"/>
    <property type="project" value="InterPro"/>
</dbReference>
<dbReference type="CDD" id="cd08965">
    <property type="entry name" value="EcNei-like_N"/>
    <property type="match status" value="1"/>
</dbReference>
<dbReference type="FunFam" id="1.10.8.50:FF:000005">
    <property type="entry name" value="Endonuclease 8"/>
    <property type="match status" value="1"/>
</dbReference>
<dbReference type="FunFam" id="3.20.190.10:FF:000002">
    <property type="entry name" value="Endonuclease 8"/>
    <property type="match status" value="1"/>
</dbReference>
<dbReference type="Gene3D" id="1.10.8.50">
    <property type="match status" value="1"/>
</dbReference>
<dbReference type="Gene3D" id="3.20.190.10">
    <property type="entry name" value="MutM-like, N-terminal"/>
    <property type="match status" value="1"/>
</dbReference>
<dbReference type="HAMAP" id="MF_01253">
    <property type="entry name" value="Endonuclease_8"/>
    <property type="match status" value="1"/>
</dbReference>
<dbReference type="InterPro" id="IPR015886">
    <property type="entry name" value="DNA_glyclase/AP_lyase_DNA-bd"/>
</dbReference>
<dbReference type="InterPro" id="IPR015887">
    <property type="entry name" value="DNA_glyclase_Znf_dom_DNA_BS"/>
</dbReference>
<dbReference type="InterPro" id="IPR044091">
    <property type="entry name" value="EcNei-like_N"/>
</dbReference>
<dbReference type="InterPro" id="IPR023713">
    <property type="entry name" value="Endonuclease-VIII"/>
</dbReference>
<dbReference type="InterPro" id="IPR012319">
    <property type="entry name" value="FPG_cat"/>
</dbReference>
<dbReference type="InterPro" id="IPR035937">
    <property type="entry name" value="MutM-like_N-ter"/>
</dbReference>
<dbReference type="InterPro" id="IPR010979">
    <property type="entry name" value="Ribosomal_uS13-like_H2TH"/>
</dbReference>
<dbReference type="InterPro" id="IPR000214">
    <property type="entry name" value="Znf_DNA_glyclase/AP_lyase"/>
</dbReference>
<dbReference type="InterPro" id="IPR010663">
    <property type="entry name" value="Znf_FPG/IleRS"/>
</dbReference>
<dbReference type="NCBIfam" id="NF007763">
    <property type="entry name" value="PRK10445.1"/>
    <property type="match status" value="1"/>
</dbReference>
<dbReference type="PANTHER" id="PTHR42697">
    <property type="entry name" value="ENDONUCLEASE 8"/>
    <property type="match status" value="1"/>
</dbReference>
<dbReference type="PANTHER" id="PTHR42697:SF1">
    <property type="entry name" value="ENDONUCLEASE 8"/>
    <property type="match status" value="1"/>
</dbReference>
<dbReference type="Pfam" id="PF01149">
    <property type="entry name" value="Fapy_DNA_glyco"/>
    <property type="match status" value="1"/>
</dbReference>
<dbReference type="Pfam" id="PF06831">
    <property type="entry name" value="H2TH"/>
    <property type="match status" value="1"/>
</dbReference>
<dbReference type="Pfam" id="PF06827">
    <property type="entry name" value="zf-FPG_IleRS"/>
    <property type="match status" value="1"/>
</dbReference>
<dbReference type="SMART" id="SM00898">
    <property type="entry name" value="Fapy_DNA_glyco"/>
    <property type="match status" value="1"/>
</dbReference>
<dbReference type="SMART" id="SM01232">
    <property type="entry name" value="H2TH"/>
    <property type="match status" value="1"/>
</dbReference>
<dbReference type="SUPFAM" id="SSF57716">
    <property type="entry name" value="Glucocorticoid receptor-like (DNA-binding domain)"/>
    <property type="match status" value="1"/>
</dbReference>
<dbReference type="SUPFAM" id="SSF81624">
    <property type="entry name" value="N-terminal domain of MutM-like DNA repair proteins"/>
    <property type="match status" value="1"/>
</dbReference>
<dbReference type="SUPFAM" id="SSF46946">
    <property type="entry name" value="S13-like H2TH domain"/>
    <property type="match status" value="1"/>
</dbReference>
<dbReference type="PROSITE" id="PS51068">
    <property type="entry name" value="FPG_CAT"/>
    <property type="match status" value="1"/>
</dbReference>
<dbReference type="PROSITE" id="PS01242">
    <property type="entry name" value="ZF_FPG_1"/>
    <property type="match status" value="1"/>
</dbReference>
<dbReference type="PROSITE" id="PS51066">
    <property type="entry name" value="ZF_FPG_2"/>
    <property type="match status" value="1"/>
</dbReference>
<keyword id="KW-0227">DNA damage</keyword>
<keyword id="KW-0234">DNA repair</keyword>
<keyword id="KW-0238">DNA-binding</keyword>
<keyword id="KW-0326">Glycosidase</keyword>
<keyword id="KW-0378">Hydrolase</keyword>
<keyword id="KW-0456">Lyase</keyword>
<keyword id="KW-0479">Metal-binding</keyword>
<keyword id="KW-0511">Multifunctional enzyme</keyword>
<keyword id="KW-0862">Zinc</keyword>
<keyword id="KW-0863">Zinc-finger</keyword>
<reference key="1">
    <citation type="journal article" date="2011" name="J. Bacteriol.">
        <title>Comparative genomics of 28 Salmonella enterica isolates: evidence for CRISPR-mediated adaptive sublineage evolution.</title>
        <authorList>
            <person name="Fricke W.F."/>
            <person name="Mammel M.K."/>
            <person name="McDermott P.F."/>
            <person name="Tartera C."/>
            <person name="White D.G."/>
            <person name="Leclerc J.E."/>
            <person name="Ravel J."/>
            <person name="Cebula T.A."/>
        </authorList>
    </citation>
    <scope>NUCLEOTIDE SEQUENCE [LARGE SCALE GENOMIC DNA]</scope>
    <source>
        <strain>SL483</strain>
    </source>
</reference>